<proteinExistence type="evidence at transcript level"/>
<sequence length="376" mass="42655">MVERGPTVYLSGLREKHFGELFLNAYNVSESSSATQASSSQAASSELGLSEEGLKHIARYIEYFESRYNDIWLVFHHEGVSLSKLMYTVEEAEISSEKAEEASHGQILRPSKWWTWLKTTESGKEEMRRIIWQLLLGLKACHDRNITHRDIKPENMVICLEDIKSGRCLKGVPNGDQNFKTNMRIIDFGSALDEYTIKHLYGSTGPSRAEQTHDYAPPEAILNSSWHHGPTSLTLKYDMWSVGVVMLEMILGSPNVFEISSVTRALLDQHIRGWSENFKELAYKLRSLMEMCILIPGSSLKHGGASSKQGGISLASWKCSEEFFAEQIKSRDPLKIGFPNVWALRLVRGLLQWYPEDRVTVDEALQHPYFQPPPSS</sequence>
<reference key="1">
    <citation type="journal article" date="2000" name="Nature">
        <title>Sequence and analysis of chromosome 3 of the plant Arabidopsis thaliana.</title>
        <authorList>
            <person name="Salanoubat M."/>
            <person name="Lemcke K."/>
            <person name="Rieger M."/>
            <person name="Ansorge W."/>
            <person name="Unseld M."/>
            <person name="Fartmann B."/>
            <person name="Valle G."/>
            <person name="Bloecker H."/>
            <person name="Perez-Alonso M."/>
            <person name="Obermaier B."/>
            <person name="Delseny M."/>
            <person name="Boutry M."/>
            <person name="Grivell L.A."/>
            <person name="Mache R."/>
            <person name="Puigdomenech P."/>
            <person name="De Simone V."/>
            <person name="Choisne N."/>
            <person name="Artiguenave F."/>
            <person name="Robert C."/>
            <person name="Brottier P."/>
            <person name="Wincker P."/>
            <person name="Cattolico L."/>
            <person name="Weissenbach J."/>
            <person name="Saurin W."/>
            <person name="Quetier F."/>
            <person name="Schaefer M."/>
            <person name="Mueller-Auer S."/>
            <person name="Gabel C."/>
            <person name="Fuchs M."/>
            <person name="Benes V."/>
            <person name="Wurmbach E."/>
            <person name="Drzonek H."/>
            <person name="Erfle H."/>
            <person name="Jordan N."/>
            <person name="Bangert S."/>
            <person name="Wiedelmann R."/>
            <person name="Kranz H."/>
            <person name="Voss H."/>
            <person name="Holland R."/>
            <person name="Brandt P."/>
            <person name="Nyakatura G."/>
            <person name="Vezzi A."/>
            <person name="D'Angelo M."/>
            <person name="Pallavicini A."/>
            <person name="Toppo S."/>
            <person name="Simionati B."/>
            <person name="Conrad A."/>
            <person name="Hornischer K."/>
            <person name="Kauer G."/>
            <person name="Loehnert T.-H."/>
            <person name="Nordsiek G."/>
            <person name="Reichelt J."/>
            <person name="Scharfe M."/>
            <person name="Schoen O."/>
            <person name="Bargues M."/>
            <person name="Terol J."/>
            <person name="Climent J."/>
            <person name="Navarro P."/>
            <person name="Collado C."/>
            <person name="Perez-Perez A."/>
            <person name="Ottenwaelder B."/>
            <person name="Duchemin D."/>
            <person name="Cooke R."/>
            <person name="Laudie M."/>
            <person name="Berger-Llauro C."/>
            <person name="Purnelle B."/>
            <person name="Masuy D."/>
            <person name="de Haan M."/>
            <person name="Maarse A.C."/>
            <person name="Alcaraz J.-P."/>
            <person name="Cottet A."/>
            <person name="Casacuberta E."/>
            <person name="Monfort A."/>
            <person name="Argiriou A."/>
            <person name="Flores M."/>
            <person name="Liguori R."/>
            <person name="Vitale D."/>
            <person name="Mannhaupt G."/>
            <person name="Haase D."/>
            <person name="Schoof H."/>
            <person name="Rudd S."/>
            <person name="Zaccaria P."/>
            <person name="Mewes H.-W."/>
            <person name="Mayer K.F.X."/>
            <person name="Kaul S."/>
            <person name="Town C.D."/>
            <person name="Koo H.L."/>
            <person name="Tallon L.J."/>
            <person name="Jenkins J."/>
            <person name="Rooney T."/>
            <person name="Rizzo M."/>
            <person name="Walts A."/>
            <person name="Utterback T."/>
            <person name="Fujii C.Y."/>
            <person name="Shea T.P."/>
            <person name="Creasy T.H."/>
            <person name="Haas B."/>
            <person name="Maiti R."/>
            <person name="Wu D."/>
            <person name="Peterson J."/>
            <person name="Van Aken S."/>
            <person name="Pai G."/>
            <person name="Militscher J."/>
            <person name="Sellers P."/>
            <person name="Gill J.E."/>
            <person name="Feldblyum T.V."/>
            <person name="Preuss D."/>
            <person name="Lin X."/>
            <person name="Nierman W.C."/>
            <person name="Salzberg S.L."/>
            <person name="White O."/>
            <person name="Venter J.C."/>
            <person name="Fraser C.M."/>
            <person name="Kaneko T."/>
            <person name="Nakamura Y."/>
            <person name="Sato S."/>
            <person name="Kato T."/>
            <person name="Asamizu E."/>
            <person name="Sasamoto S."/>
            <person name="Kimura T."/>
            <person name="Idesawa K."/>
            <person name="Kawashima K."/>
            <person name="Kishida Y."/>
            <person name="Kiyokawa C."/>
            <person name="Kohara M."/>
            <person name="Matsumoto M."/>
            <person name="Matsuno A."/>
            <person name="Muraki A."/>
            <person name="Nakayama S."/>
            <person name="Nakazaki N."/>
            <person name="Shinpo S."/>
            <person name="Takeuchi C."/>
            <person name="Wada T."/>
            <person name="Watanabe A."/>
            <person name="Yamada M."/>
            <person name="Yasuda M."/>
            <person name="Tabata S."/>
        </authorList>
    </citation>
    <scope>NUCLEOTIDE SEQUENCE [LARGE SCALE GENOMIC DNA]</scope>
    <source>
        <strain>cv. Columbia</strain>
    </source>
</reference>
<reference key="2">
    <citation type="journal article" date="2017" name="Plant J.">
        <title>Araport11: a complete reannotation of the Arabidopsis thaliana reference genome.</title>
        <authorList>
            <person name="Cheng C.Y."/>
            <person name="Krishnakumar V."/>
            <person name="Chan A.P."/>
            <person name="Thibaud-Nissen F."/>
            <person name="Schobel S."/>
            <person name="Town C.D."/>
        </authorList>
    </citation>
    <scope>GENOME REANNOTATION</scope>
    <source>
        <strain>cv. Columbia</strain>
    </source>
</reference>
<reference key="3">
    <citation type="journal article" date="2003" name="Science">
        <title>Empirical analysis of transcriptional activity in the Arabidopsis genome.</title>
        <authorList>
            <person name="Yamada K."/>
            <person name="Lim J."/>
            <person name="Dale J.M."/>
            <person name="Chen H."/>
            <person name="Shinn P."/>
            <person name="Palm C.J."/>
            <person name="Southwick A.M."/>
            <person name="Wu H.C."/>
            <person name="Kim C.J."/>
            <person name="Nguyen M."/>
            <person name="Pham P.K."/>
            <person name="Cheuk R.F."/>
            <person name="Karlin-Newmann G."/>
            <person name="Liu S.X."/>
            <person name="Lam B."/>
            <person name="Sakano H."/>
            <person name="Wu T."/>
            <person name="Yu G."/>
            <person name="Miranda M."/>
            <person name="Quach H.L."/>
            <person name="Tripp M."/>
            <person name="Chang C.H."/>
            <person name="Lee J.M."/>
            <person name="Toriumi M.J."/>
            <person name="Chan M.M."/>
            <person name="Tang C.C."/>
            <person name="Onodera C.S."/>
            <person name="Deng J.M."/>
            <person name="Akiyama K."/>
            <person name="Ansari Y."/>
            <person name="Arakawa T."/>
            <person name="Banh J."/>
            <person name="Banno F."/>
            <person name="Bowser L."/>
            <person name="Brooks S.Y."/>
            <person name="Carninci P."/>
            <person name="Chao Q."/>
            <person name="Choy N."/>
            <person name="Enju A."/>
            <person name="Goldsmith A.D."/>
            <person name="Gurjal M."/>
            <person name="Hansen N.F."/>
            <person name="Hayashizaki Y."/>
            <person name="Johnson-Hopson C."/>
            <person name="Hsuan V.W."/>
            <person name="Iida K."/>
            <person name="Karnes M."/>
            <person name="Khan S."/>
            <person name="Koesema E."/>
            <person name="Ishida J."/>
            <person name="Jiang P.X."/>
            <person name="Jones T."/>
            <person name="Kawai J."/>
            <person name="Kamiya A."/>
            <person name="Meyers C."/>
            <person name="Nakajima M."/>
            <person name="Narusaka M."/>
            <person name="Seki M."/>
            <person name="Sakurai T."/>
            <person name="Satou M."/>
            <person name="Tamse R."/>
            <person name="Vaysberg M."/>
            <person name="Wallender E.K."/>
            <person name="Wong C."/>
            <person name="Yamamura Y."/>
            <person name="Yuan S."/>
            <person name="Shinozaki K."/>
            <person name="Davis R.W."/>
            <person name="Theologis A."/>
            <person name="Ecker J.R."/>
        </authorList>
    </citation>
    <scope>NUCLEOTIDE SEQUENCE [LARGE SCALE MRNA]</scope>
    <source>
        <strain>cv. Columbia</strain>
    </source>
</reference>
<reference key="4">
    <citation type="submission" date="2006-07" db="EMBL/GenBank/DDBJ databases">
        <title>Large-scale analysis of RIKEN Arabidopsis full-length (RAFL) cDNAs.</title>
        <authorList>
            <person name="Totoki Y."/>
            <person name="Seki M."/>
            <person name="Ishida J."/>
            <person name="Nakajima M."/>
            <person name="Enju A."/>
            <person name="Kamiya A."/>
            <person name="Narusaka M."/>
            <person name="Shin-i T."/>
            <person name="Nakagawa M."/>
            <person name="Sakamoto N."/>
            <person name="Oishi K."/>
            <person name="Kohara Y."/>
            <person name="Kobayashi M."/>
            <person name="Toyoda A."/>
            <person name="Sakaki Y."/>
            <person name="Sakurai T."/>
            <person name="Iida K."/>
            <person name="Akiyama K."/>
            <person name="Satou M."/>
            <person name="Toyoda T."/>
            <person name="Konagaya A."/>
            <person name="Carninci P."/>
            <person name="Kawai J."/>
            <person name="Hayashizaki Y."/>
            <person name="Shinozaki K."/>
        </authorList>
    </citation>
    <scope>NUCLEOTIDE SEQUENCE [LARGE SCALE MRNA]</scope>
    <source>
        <strain>cv. Columbia</strain>
    </source>
</reference>
<name>Y3333_ARATH</name>
<gene>
    <name type="ordered locus">At3g63330</name>
    <name type="ORF">F16M2.180</name>
    <name type="ORF">MAA21.2</name>
</gene>
<comment type="domain">
    <text>The protein kinase domain is predicted to be catalytically inactive.</text>
</comment>
<comment type="similarity">
    <text evidence="1">Belongs to the protein kinase superfamily. Ser/Thr protein kinase family.</text>
</comment>
<comment type="sequence caution" evidence="2">
    <conflict type="erroneous gene model prediction">
        <sequence resource="EMBL-CDS" id="AEE80468"/>
    </conflict>
    <text>The predicted gene has been split into 2 genes: At3g63330 and At3g63340.</text>
</comment>
<comment type="sequence caution" evidence="2">
    <conflict type="erroneous gene model prediction">
        <sequence resource="EMBL-CDS" id="AEE80469"/>
    </conflict>
    <text>The predicted gene has been split into 2 genes: At3g63330 and At3g63340.</text>
</comment>
<comment type="sequence caution" evidence="2">
    <conflict type="erroneous gene model prediction">
        <sequence resource="EMBL-CDS" id="CAB86434"/>
    </conflict>
</comment>
<comment type="sequence caution" evidence="2">
    <conflict type="erroneous gene model prediction">
        <sequence resource="EMBL-CDS" id="CAB86435"/>
    </conflict>
    <text>The predicted gene has been split into 2 genes: At3g63330 and At3g63340.</text>
</comment>
<accession>Q8RXY0</accession>
<accession>F4J0Z1</accession>
<accession>F4J0Z2</accession>
<accession>Q9M1V6</accession>
<accession>Q9M1V7</accession>
<feature type="chain" id="PRO_0000368000" description="Probable inactive protein kinase At3g63330">
    <location>
        <begin position="1"/>
        <end position="376"/>
    </location>
</feature>
<feature type="domain" description="Protein kinase" evidence="1">
    <location>
        <begin position="1"/>
        <end position="370"/>
    </location>
</feature>
<protein>
    <recommendedName>
        <fullName>Probable inactive protein kinase At3g63330</fullName>
    </recommendedName>
</protein>
<evidence type="ECO:0000255" key="1">
    <source>
        <dbReference type="PROSITE-ProRule" id="PRU00159"/>
    </source>
</evidence>
<evidence type="ECO:0000305" key="2"/>
<organism>
    <name type="scientific">Arabidopsis thaliana</name>
    <name type="common">Mouse-ear cress</name>
    <dbReference type="NCBI Taxonomy" id="3702"/>
    <lineage>
        <taxon>Eukaryota</taxon>
        <taxon>Viridiplantae</taxon>
        <taxon>Streptophyta</taxon>
        <taxon>Embryophyta</taxon>
        <taxon>Tracheophyta</taxon>
        <taxon>Spermatophyta</taxon>
        <taxon>Magnoliopsida</taxon>
        <taxon>eudicotyledons</taxon>
        <taxon>Gunneridae</taxon>
        <taxon>Pentapetalae</taxon>
        <taxon>rosids</taxon>
        <taxon>malvids</taxon>
        <taxon>Brassicales</taxon>
        <taxon>Brassicaceae</taxon>
        <taxon>Camelineae</taxon>
        <taxon>Arabidopsis</taxon>
    </lineage>
</organism>
<dbReference type="EMBL" id="AL138648">
    <property type="protein sequence ID" value="CAB86434.1"/>
    <property type="status" value="ALT_SEQ"/>
    <property type="molecule type" value="Genomic_DNA"/>
</dbReference>
<dbReference type="EMBL" id="AL138648">
    <property type="protein sequence ID" value="CAB86435.1"/>
    <property type="status" value="ALT_SEQ"/>
    <property type="molecule type" value="Genomic_DNA"/>
</dbReference>
<dbReference type="EMBL" id="CP002686">
    <property type="protein sequence ID" value="AEE80468.1"/>
    <property type="status" value="ALT_SEQ"/>
    <property type="molecule type" value="Genomic_DNA"/>
</dbReference>
<dbReference type="EMBL" id="CP002686">
    <property type="protein sequence ID" value="AEE80469.1"/>
    <property type="status" value="ALT_SEQ"/>
    <property type="molecule type" value="Genomic_DNA"/>
</dbReference>
<dbReference type="EMBL" id="AY080616">
    <property type="protein sequence ID" value="AAL86300.1"/>
    <property type="molecule type" value="mRNA"/>
</dbReference>
<dbReference type="EMBL" id="AY122955">
    <property type="protein sequence ID" value="AAM67488.1"/>
    <property type="molecule type" value="mRNA"/>
</dbReference>
<dbReference type="EMBL" id="AK227114">
    <property type="protein sequence ID" value="BAE99165.1"/>
    <property type="molecule type" value="mRNA"/>
</dbReference>
<dbReference type="PIR" id="T48122">
    <property type="entry name" value="T48122"/>
</dbReference>
<dbReference type="RefSeq" id="NP_001190168.1">
    <property type="nucleotide sequence ID" value="NM_001203239.1"/>
</dbReference>
<dbReference type="RefSeq" id="NP_001326270.1">
    <property type="nucleotide sequence ID" value="NM_001340206.1"/>
</dbReference>
<dbReference type="RefSeq" id="NP_567145.2">
    <property type="nucleotide sequence ID" value="NM_116199.5"/>
</dbReference>
<dbReference type="FunCoup" id="Q8RXY0">
    <property type="interactions" value="7"/>
</dbReference>
<dbReference type="STRING" id="3702.Q8RXY0"/>
<dbReference type="PeptideAtlas" id="Q8RXY0"/>
<dbReference type="Araport" id="AT3G63330"/>
<dbReference type="TAIR" id="AT3G63330"/>
<dbReference type="HOGENOM" id="CLU_012110_0_0_1"/>
<dbReference type="InParanoid" id="Q8RXY0"/>
<dbReference type="PhylomeDB" id="Q8RXY0"/>
<dbReference type="PRO" id="PR:Q8RXY0"/>
<dbReference type="Proteomes" id="UP000006548">
    <property type="component" value="Chromosome 3"/>
</dbReference>
<dbReference type="ExpressionAtlas" id="Q8RXY0">
    <property type="expression patterns" value="baseline and differential"/>
</dbReference>
<dbReference type="GO" id="GO:0005634">
    <property type="term" value="C:nucleus"/>
    <property type="evidence" value="ECO:0000318"/>
    <property type="project" value="GO_Central"/>
</dbReference>
<dbReference type="GO" id="GO:0005524">
    <property type="term" value="F:ATP binding"/>
    <property type="evidence" value="ECO:0007669"/>
    <property type="project" value="InterPro"/>
</dbReference>
<dbReference type="GO" id="GO:0004674">
    <property type="term" value="F:protein serine/threonine kinase activity"/>
    <property type="evidence" value="ECO:0000318"/>
    <property type="project" value="GO_Central"/>
</dbReference>
<dbReference type="GO" id="GO:0044773">
    <property type="term" value="P:mitotic DNA damage checkpoint signaling"/>
    <property type="evidence" value="ECO:0000318"/>
    <property type="project" value="GO_Central"/>
</dbReference>
<dbReference type="Gene3D" id="1.10.510.10">
    <property type="entry name" value="Transferase(Phosphotransferase) domain 1"/>
    <property type="match status" value="1"/>
</dbReference>
<dbReference type="InterPro" id="IPR011009">
    <property type="entry name" value="Kinase-like_dom_sf"/>
</dbReference>
<dbReference type="InterPro" id="IPR000719">
    <property type="entry name" value="Prot_kinase_dom"/>
</dbReference>
<dbReference type="InterPro" id="IPR008271">
    <property type="entry name" value="Ser/Thr_kinase_AS"/>
</dbReference>
<dbReference type="PANTHER" id="PTHR44167">
    <property type="entry name" value="OVARIAN-SPECIFIC SERINE/THREONINE-PROTEIN KINASE LOK-RELATED"/>
    <property type="match status" value="1"/>
</dbReference>
<dbReference type="PANTHER" id="PTHR44167:SF30">
    <property type="entry name" value="PHOSPHORYLASE KINASE"/>
    <property type="match status" value="1"/>
</dbReference>
<dbReference type="Pfam" id="PF00069">
    <property type="entry name" value="Pkinase"/>
    <property type="match status" value="1"/>
</dbReference>
<dbReference type="SMART" id="SM00220">
    <property type="entry name" value="S_TKc"/>
    <property type="match status" value="1"/>
</dbReference>
<dbReference type="SUPFAM" id="SSF56112">
    <property type="entry name" value="Protein kinase-like (PK-like)"/>
    <property type="match status" value="1"/>
</dbReference>
<dbReference type="PROSITE" id="PS50011">
    <property type="entry name" value="PROTEIN_KINASE_DOM"/>
    <property type="match status" value="1"/>
</dbReference>
<dbReference type="PROSITE" id="PS00108">
    <property type="entry name" value="PROTEIN_KINASE_ST"/>
    <property type="match status" value="1"/>
</dbReference>
<keyword id="KW-1185">Reference proteome</keyword>